<sequence>MATYLDFEQKIKNLQDDIESAIISGDNDAISILEKELEKEVSSVYSNISDYQKLQLARHPDRPYAMDYIESILKNPYEINGDRHFKDDKAIVCFLGKIGEQTTMIIGEEKGRGTKNKLARNFGMPSPEGYRKALRAAKLAEKFHIPILMLVDTQGAYPGLGAEERGQSEAIARNLQEFAKLKTPTIAVVIGEGGSGGALAIAVADKLAMMQYSIFSVISPEGCAAILWNDPSKIESATKALKITPIELKKCGLIDDVINEPLIGAHRDKESAAKAIESYFLKAFEEISQDDNYLNKRYQKLMNYGAFS</sequence>
<evidence type="ECO:0000255" key="1">
    <source>
        <dbReference type="HAMAP-Rule" id="MF_00823"/>
    </source>
</evidence>
<evidence type="ECO:0000255" key="2">
    <source>
        <dbReference type="PROSITE-ProRule" id="PRU01137"/>
    </source>
</evidence>
<gene>
    <name evidence="1" type="primary">accA</name>
    <name type="ordered locus">HH_0726</name>
</gene>
<accession>Q7VI82</accession>
<name>ACCA_HELHP</name>
<organism>
    <name type="scientific">Helicobacter hepaticus (strain ATCC 51449 / 3B1)</name>
    <dbReference type="NCBI Taxonomy" id="235279"/>
    <lineage>
        <taxon>Bacteria</taxon>
        <taxon>Pseudomonadati</taxon>
        <taxon>Campylobacterota</taxon>
        <taxon>Epsilonproteobacteria</taxon>
        <taxon>Campylobacterales</taxon>
        <taxon>Helicobacteraceae</taxon>
        <taxon>Helicobacter</taxon>
    </lineage>
</organism>
<protein>
    <recommendedName>
        <fullName evidence="1">Acetyl-coenzyme A carboxylase carboxyl transferase subunit alpha</fullName>
        <shortName evidence="1">ACCase subunit alpha</shortName>
        <shortName evidence="1">Acetyl-CoA carboxylase carboxyltransferase subunit alpha</shortName>
        <ecNumber evidence="1">2.1.3.15</ecNumber>
    </recommendedName>
</protein>
<comment type="function">
    <text evidence="1">Component of the acetyl coenzyme A carboxylase (ACC) complex. First, biotin carboxylase catalyzes the carboxylation of biotin on its carrier protein (BCCP) and then the CO(2) group is transferred by the carboxyltransferase to acetyl-CoA to form malonyl-CoA.</text>
</comment>
<comment type="catalytic activity">
    <reaction evidence="1">
        <text>N(6)-carboxybiotinyl-L-lysyl-[protein] + acetyl-CoA = N(6)-biotinyl-L-lysyl-[protein] + malonyl-CoA</text>
        <dbReference type="Rhea" id="RHEA:54728"/>
        <dbReference type="Rhea" id="RHEA-COMP:10505"/>
        <dbReference type="Rhea" id="RHEA-COMP:10506"/>
        <dbReference type="ChEBI" id="CHEBI:57288"/>
        <dbReference type="ChEBI" id="CHEBI:57384"/>
        <dbReference type="ChEBI" id="CHEBI:83144"/>
        <dbReference type="ChEBI" id="CHEBI:83145"/>
        <dbReference type="EC" id="2.1.3.15"/>
    </reaction>
</comment>
<comment type="pathway">
    <text evidence="1">Lipid metabolism; malonyl-CoA biosynthesis; malonyl-CoA from acetyl-CoA: step 1/1.</text>
</comment>
<comment type="subunit">
    <text evidence="1">Acetyl-CoA carboxylase is a heterohexamer composed of biotin carboxyl carrier protein (AccB), biotin carboxylase (AccC) and two subunits each of ACCase subunit alpha (AccA) and ACCase subunit beta (AccD).</text>
</comment>
<comment type="subcellular location">
    <subcellularLocation>
        <location evidence="1">Cytoplasm</location>
    </subcellularLocation>
</comment>
<comment type="similarity">
    <text evidence="1">Belongs to the AccA family.</text>
</comment>
<dbReference type="EC" id="2.1.3.15" evidence="1"/>
<dbReference type="EMBL" id="AE017125">
    <property type="protein sequence ID" value="AAP77323.1"/>
    <property type="molecule type" value="Genomic_DNA"/>
</dbReference>
<dbReference type="RefSeq" id="WP_011115568.1">
    <property type="nucleotide sequence ID" value="NC_004917.1"/>
</dbReference>
<dbReference type="SMR" id="Q7VI82"/>
<dbReference type="STRING" id="235279.HH_0726"/>
<dbReference type="KEGG" id="hhe:HH_0726"/>
<dbReference type="eggNOG" id="COG0825">
    <property type="taxonomic scope" value="Bacteria"/>
</dbReference>
<dbReference type="HOGENOM" id="CLU_015486_0_2_7"/>
<dbReference type="OrthoDB" id="9808023at2"/>
<dbReference type="UniPathway" id="UPA00655">
    <property type="reaction ID" value="UER00711"/>
</dbReference>
<dbReference type="Proteomes" id="UP000002495">
    <property type="component" value="Chromosome"/>
</dbReference>
<dbReference type="GO" id="GO:0009317">
    <property type="term" value="C:acetyl-CoA carboxylase complex"/>
    <property type="evidence" value="ECO:0007669"/>
    <property type="project" value="InterPro"/>
</dbReference>
<dbReference type="GO" id="GO:0003989">
    <property type="term" value="F:acetyl-CoA carboxylase activity"/>
    <property type="evidence" value="ECO:0007669"/>
    <property type="project" value="InterPro"/>
</dbReference>
<dbReference type="GO" id="GO:0005524">
    <property type="term" value="F:ATP binding"/>
    <property type="evidence" value="ECO:0007669"/>
    <property type="project" value="UniProtKB-KW"/>
</dbReference>
<dbReference type="GO" id="GO:0016743">
    <property type="term" value="F:carboxyl- or carbamoyltransferase activity"/>
    <property type="evidence" value="ECO:0007669"/>
    <property type="project" value="UniProtKB-UniRule"/>
</dbReference>
<dbReference type="GO" id="GO:0006633">
    <property type="term" value="P:fatty acid biosynthetic process"/>
    <property type="evidence" value="ECO:0007669"/>
    <property type="project" value="UniProtKB-KW"/>
</dbReference>
<dbReference type="GO" id="GO:2001295">
    <property type="term" value="P:malonyl-CoA biosynthetic process"/>
    <property type="evidence" value="ECO:0007669"/>
    <property type="project" value="UniProtKB-UniRule"/>
</dbReference>
<dbReference type="Gene3D" id="3.90.226.10">
    <property type="entry name" value="2-enoyl-CoA Hydratase, Chain A, domain 1"/>
    <property type="match status" value="1"/>
</dbReference>
<dbReference type="HAMAP" id="MF_00823">
    <property type="entry name" value="AcetylCoA_CT_alpha"/>
    <property type="match status" value="1"/>
</dbReference>
<dbReference type="InterPro" id="IPR001095">
    <property type="entry name" value="Acetyl_CoA_COase_a_su"/>
</dbReference>
<dbReference type="InterPro" id="IPR029045">
    <property type="entry name" value="ClpP/crotonase-like_dom_sf"/>
</dbReference>
<dbReference type="InterPro" id="IPR011763">
    <property type="entry name" value="COA_CT_C"/>
</dbReference>
<dbReference type="NCBIfam" id="TIGR00513">
    <property type="entry name" value="accA"/>
    <property type="match status" value="1"/>
</dbReference>
<dbReference type="NCBIfam" id="NF041504">
    <property type="entry name" value="AccA_sub"/>
    <property type="match status" value="1"/>
</dbReference>
<dbReference type="NCBIfam" id="NF004344">
    <property type="entry name" value="PRK05724.1"/>
    <property type="match status" value="1"/>
</dbReference>
<dbReference type="PANTHER" id="PTHR42853">
    <property type="entry name" value="ACETYL-COENZYME A CARBOXYLASE CARBOXYL TRANSFERASE SUBUNIT ALPHA"/>
    <property type="match status" value="1"/>
</dbReference>
<dbReference type="PANTHER" id="PTHR42853:SF3">
    <property type="entry name" value="ACETYL-COENZYME A CARBOXYLASE CARBOXYL TRANSFERASE SUBUNIT ALPHA, CHLOROPLASTIC"/>
    <property type="match status" value="1"/>
</dbReference>
<dbReference type="Pfam" id="PF03255">
    <property type="entry name" value="ACCA"/>
    <property type="match status" value="1"/>
</dbReference>
<dbReference type="PRINTS" id="PR01069">
    <property type="entry name" value="ACCCTRFRASEA"/>
</dbReference>
<dbReference type="SUPFAM" id="SSF52096">
    <property type="entry name" value="ClpP/crotonase"/>
    <property type="match status" value="1"/>
</dbReference>
<dbReference type="PROSITE" id="PS50989">
    <property type="entry name" value="COA_CT_CTER"/>
    <property type="match status" value="1"/>
</dbReference>
<feature type="chain" id="PRO_0000223776" description="Acetyl-coenzyme A carboxylase carboxyl transferase subunit alpha">
    <location>
        <begin position="1"/>
        <end position="308"/>
    </location>
</feature>
<feature type="domain" description="CoA carboxyltransferase C-terminal" evidence="2">
    <location>
        <begin position="36"/>
        <end position="286"/>
    </location>
</feature>
<reference key="1">
    <citation type="journal article" date="2003" name="Proc. Natl. Acad. Sci. U.S.A.">
        <title>The complete genome sequence of the carcinogenic bacterium Helicobacter hepaticus.</title>
        <authorList>
            <person name="Suerbaum S."/>
            <person name="Josenhans C."/>
            <person name="Sterzenbach T."/>
            <person name="Drescher B."/>
            <person name="Brandt P."/>
            <person name="Bell M."/>
            <person name="Droege M."/>
            <person name="Fartmann B."/>
            <person name="Fischer H.-P."/>
            <person name="Ge Z."/>
            <person name="Hoerster A."/>
            <person name="Holland R."/>
            <person name="Klein K."/>
            <person name="Koenig J."/>
            <person name="Macko L."/>
            <person name="Mendz G.L."/>
            <person name="Nyakatura G."/>
            <person name="Schauer D.B."/>
            <person name="Shen Z."/>
            <person name="Weber J."/>
            <person name="Frosch M."/>
            <person name="Fox J.G."/>
        </authorList>
    </citation>
    <scope>NUCLEOTIDE SEQUENCE [LARGE SCALE GENOMIC DNA]</scope>
    <source>
        <strain>ATCC 51449 / 3B1</strain>
    </source>
</reference>
<proteinExistence type="inferred from homology"/>
<keyword id="KW-0067">ATP-binding</keyword>
<keyword id="KW-0963">Cytoplasm</keyword>
<keyword id="KW-0275">Fatty acid biosynthesis</keyword>
<keyword id="KW-0276">Fatty acid metabolism</keyword>
<keyword id="KW-0444">Lipid biosynthesis</keyword>
<keyword id="KW-0443">Lipid metabolism</keyword>
<keyword id="KW-0547">Nucleotide-binding</keyword>
<keyword id="KW-1185">Reference proteome</keyword>
<keyword id="KW-0808">Transferase</keyword>